<name>DAPB_BRUA2</name>
<comment type="function">
    <text evidence="1">Catalyzes the conversion of 4-hydroxy-tetrahydrodipicolinate (HTPA) to tetrahydrodipicolinate.</text>
</comment>
<comment type="catalytic activity">
    <reaction evidence="1">
        <text>(S)-2,3,4,5-tetrahydrodipicolinate + NAD(+) + H2O = (2S,4S)-4-hydroxy-2,3,4,5-tetrahydrodipicolinate + NADH + H(+)</text>
        <dbReference type="Rhea" id="RHEA:35323"/>
        <dbReference type="ChEBI" id="CHEBI:15377"/>
        <dbReference type="ChEBI" id="CHEBI:15378"/>
        <dbReference type="ChEBI" id="CHEBI:16845"/>
        <dbReference type="ChEBI" id="CHEBI:57540"/>
        <dbReference type="ChEBI" id="CHEBI:57945"/>
        <dbReference type="ChEBI" id="CHEBI:67139"/>
        <dbReference type="EC" id="1.17.1.8"/>
    </reaction>
</comment>
<comment type="catalytic activity">
    <reaction evidence="1">
        <text>(S)-2,3,4,5-tetrahydrodipicolinate + NADP(+) + H2O = (2S,4S)-4-hydroxy-2,3,4,5-tetrahydrodipicolinate + NADPH + H(+)</text>
        <dbReference type="Rhea" id="RHEA:35331"/>
        <dbReference type="ChEBI" id="CHEBI:15377"/>
        <dbReference type="ChEBI" id="CHEBI:15378"/>
        <dbReference type="ChEBI" id="CHEBI:16845"/>
        <dbReference type="ChEBI" id="CHEBI:57783"/>
        <dbReference type="ChEBI" id="CHEBI:58349"/>
        <dbReference type="ChEBI" id="CHEBI:67139"/>
        <dbReference type="EC" id="1.17.1.8"/>
    </reaction>
</comment>
<comment type="pathway">
    <text evidence="1">Amino-acid biosynthesis; L-lysine biosynthesis via DAP pathway; (S)-tetrahydrodipicolinate from L-aspartate: step 4/4.</text>
</comment>
<comment type="subcellular location">
    <subcellularLocation>
        <location evidence="1">Cytoplasm</location>
    </subcellularLocation>
</comment>
<comment type="similarity">
    <text evidence="1">Belongs to the DapB family.</text>
</comment>
<comment type="caution">
    <text evidence="2">Was originally thought to be a dihydrodipicolinate reductase (DHDPR), catalyzing the conversion of dihydrodipicolinate to tetrahydrodipicolinate. However, it was shown in E.coli that the substrate of the enzymatic reaction is not dihydrodipicolinate (DHDP) but in fact (2S,4S)-4-hydroxy-2,3,4,5-tetrahydrodipicolinic acid (HTPA), the product released by the DapA-catalyzed reaction.</text>
</comment>
<proteinExistence type="inferred from homology"/>
<dbReference type="EC" id="1.17.1.8" evidence="1"/>
<dbReference type="EMBL" id="AM040265">
    <property type="protein sequence ID" value="CAJ13178.1"/>
    <property type="molecule type" value="Genomic_DNA"/>
</dbReference>
<dbReference type="SMR" id="Q2YJN7"/>
<dbReference type="STRING" id="359391.BAB2_1012"/>
<dbReference type="KEGG" id="bmf:BAB2_1012"/>
<dbReference type="PATRIC" id="fig|359391.11.peg.699"/>
<dbReference type="HOGENOM" id="CLU_047479_2_1_5"/>
<dbReference type="BRENDA" id="1.17.1.8">
    <property type="organism ID" value="994"/>
</dbReference>
<dbReference type="UniPathway" id="UPA00034">
    <property type="reaction ID" value="UER00018"/>
</dbReference>
<dbReference type="Proteomes" id="UP000002719">
    <property type="component" value="Chromosome II"/>
</dbReference>
<dbReference type="GO" id="GO:0005829">
    <property type="term" value="C:cytosol"/>
    <property type="evidence" value="ECO:0007669"/>
    <property type="project" value="TreeGrafter"/>
</dbReference>
<dbReference type="GO" id="GO:0008839">
    <property type="term" value="F:4-hydroxy-tetrahydrodipicolinate reductase"/>
    <property type="evidence" value="ECO:0007669"/>
    <property type="project" value="UniProtKB-EC"/>
</dbReference>
<dbReference type="GO" id="GO:0051287">
    <property type="term" value="F:NAD binding"/>
    <property type="evidence" value="ECO:0007669"/>
    <property type="project" value="UniProtKB-UniRule"/>
</dbReference>
<dbReference type="GO" id="GO:0050661">
    <property type="term" value="F:NADP binding"/>
    <property type="evidence" value="ECO:0007669"/>
    <property type="project" value="UniProtKB-UniRule"/>
</dbReference>
<dbReference type="GO" id="GO:0016726">
    <property type="term" value="F:oxidoreductase activity, acting on CH or CH2 groups, NAD or NADP as acceptor"/>
    <property type="evidence" value="ECO:0007669"/>
    <property type="project" value="UniProtKB-UniRule"/>
</dbReference>
<dbReference type="GO" id="GO:0019877">
    <property type="term" value="P:diaminopimelate biosynthetic process"/>
    <property type="evidence" value="ECO:0007669"/>
    <property type="project" value="UniProtKB-UniRule"/>
</dbReference>
<dbReference type="GO" id="GO:0009089">
    <property type="term" value="P:lysine biosynthetic process via diaminopimelate"/>
    <property type="evidence" value="ECO:0007669"/>
    <property type="project" value="UniProtKB-UniRule"/>
</dbReference>
<dbReference type="CDD" id="cd02274">
    <property type="entry name" value="DHDPR_N"/>
    <property type="match status" value="1"/>
</dbReference>
<dbReference type="FunFam" id="3.30.360.10:FF:000004">
    <property type="entry name" value="4-hydroxy-tetrahydrodipicolinate reductase"/>
    <property type="match status" value="1"/>
</dbReference>
<dbReference type="Gene3D" id="3.30.360.10">
    <property type="entry name" value="Dihydrodipicolinate Reductase, domain 2"/>
    <property type="match status" value="1"/>
</dbReference>
<dbReference type="Gene3D" id="3.40.50.720">
    <property type="entry name" value="NAD(P)-binding Rossmann-like Domain"/>
    <property type="match status" value="1"/>
</dbReference>
<dbReference type="HAMAP" id="MF_00102">
    <property type="entry name" value="DapB"/>
    <property type="match status" value="1"/>
</dbReference>
<dbReference type="InterPro" id="IPR022663">
    <property type="entry name" value="DapB_C"/>
</dbReference>
<dbReference type="InterPro" id="IPR000846">
    <property type="entry name" value="DapB_N"/>
</dbReference>
<dbReference type="InterPro" id="IPR022664">
    <property type="entry name" value="DapB_N_CS"/>
</dbReference>
<dbReference type="InterPro" id="IPR023940">
    <property type="entry name" value="DHDPR_bac"/>
</dbReference>
<dbReference type="InterPro" id="IPR036291">
    <property type="entry name" value="NAD(P)-bd_dom_sf"/>
</dbReference>
<dbReference type="NCBIfam" id="TIGR00036">
    <property type="entry name" value="dapB"/>
    <property type="match status" value="1"/>
</dbReference>
<dbReference type="PANTHER" id="PTHR20836:SF0">
    <property type="entry name" value="4-HYDROXY-TETRAHYDRODIPICOLINATE REDUCTASE 1, CHLOROPLASTIC-RELATED"/>
    <property type="match status" value="1"/>
</dbReference>
<dbReference type="PANTHER" id="PTHR20836">
    <property type="entry name" value="DIHYDRODIPICOLINATE REDUCTASE"/>
    <property type="match status" value="1"/>
</dbReference>
<dbReference type="Pfam" id="PF05173">
    <property type="entry name" value="DapB_C"/>
    <property type="match status" value="1"/>
</dbReference>
<dbReference type="Pfam" id="PF01113">
    <property type="entry name" value="DapB_N"/>
    <property type="match status" value="1"/>
</dbReference>
<dbReference type="PIRSF" id="PIRSF000161">
    <property type="entry name" value="DHPR"/>
    <property type="match status" value="1"/>
</dbReference>
<dbReference type="SUPFAM" id="SSF55347">
    <property type="entry name" value="Glyceraldehyde-3-phosphate dehydrogenase-like, C-terminal domain"/>
    <property type="match status" value="1"/>
</dbReference>
<dbReference type="SUPFAM" id="SSF51735">
    <property type="entry name" value="NAD(P)-binding Rossmann-fold domains"/>
    <property type="match status" value="1"/>
</dbReference>
<dbReference type="PROSITE" id="PS01298">
    <property type="entry name" value="DAPB"/>
    <property type="match status" value="1"/>
</dbReference>
<sequence>MGLVVVGAGGRMGQTLIRTIQSIEGAKLVGAIERSGSPFLGKDAGEVTGIGTLGVAITDDPLPVFAKAHGVLDFTSPAASVEFAGLAAQARIVHVIGTTGCSAEDDEKIRAAARHATIVKSGNMSLGVNLLSVLVQKAAEALGPEDFDIEILEMHHRHKVDAPSGTALLLGEAAARGRDIALADNSVRVRDGYTGPRETGAIGFATLRGGSVIGDHSVILAGTGERVVLSHHAEDRSIFARGAIKAALWAHGKKPGLYSMLDVLGLNT</sequence>
<organism>
    <name type="scientific">Brucella abortus (strain 2308)</name>
    <dbReference type="NCBI Taxonomy" id="359391"/>
    <lineage>
        <taxon>Bacteria</taxon>
        <taxon>Pseudomonadati</taxon>
        <taxon>Pseudomonadota</taxon>
        <taxon>Alphaproteobacteria</taxon>
        <taxon>Hyphomicrobiales</taxon>
        <taxon>Brucellaceae</taxon>
        <taxon>Brucella/Ochrobactrum group</taxon>
        <taxon>Brucella</taxon>
    </lineage>
</organism>
<gene>
    <name evidence="1" type="primary">dapB</name>
    <name type="ordered locus">BAB2_1012</name>
</gene>
<protein>
    <recommendedName>
        <fullName evidence="1">4-hydroxy-tetrahydrodipicolinate reductase</fullName>
        <shortName evidence="1">HTPA reductase</shortName>
        <ecNumber evidence="1">1.17.1.8</ecNumber>
    </recommendedName>
</protein>
<feature type="chain" id="PRO_0000228331" description="4-hydroxy-tetrahydrodipicolinate reductase">
    <location>
        <begin position="1"/>
        <end position="268"/>
    </location>
</feature>
<feature type="active site" description="Proton donor/acceptor" evidence="1">
    <location>
        <position position="155"/>
    </location>
</feature>
<feature type="active site" description="Proton donor" evidence="1">
    <location>
        <position position="159"/>
    </location>
</feature>
<feature type="binding site" evidence="1">
    <location>
        <begin position="7"/>
        <end position="12"/>
    </location>
    <ligand>
        <name>NAD(+)</name>
        <dbReference type="ChEBI" id="CHEBI:57540"/>
    </ligand>
</feature>
<feature type="binding site" evidence="1">
    <location>
        <position position="33"/>
    </location>
    <ligand>
        <name>NAD(+)</name>
        <dbReference type="ChEBI" id="CHEBI:57540"/>
    </ligand>
</feature>
<feature type="binding site" evidence="1">
    <location>
        <position position="34"/>
    </location>
    <ligand>
        <name>NADP(+)</name>
        <dbReference type="ChEBI" id="CHEBI:58349"/>
    </ligand>
</feature>
<feature type="binding site" evidence="1">
    <location>
        <begin position="97"/>
        <end position="99"/>
    </location>
    <ligand>
        <name>NAD(+)</name>
        <dbReference type="ChEBI" id="CHEBI:57540"/>
    </ligand>
</feature>
<feature type="binding site" evidence="1">
    <location>
        <begin position="121"/>
        <end position="124"/>
    </location>
    <ligand>
        <name>NAD(+)</name>
        <dbReference type="ChEBI" id="CHEBI:57540"/>
    </ligand>
</feature>
<feature type="binding site" evidence="1">
    <location>
        <position position="156"/>
    </location>
    <ligand>
        <name>(S)-2,3,4,5-tetrahydrodipicolinate</name>
        <dbReference type="ChEBI" id="CHEBI:16845"/>
    </ligand>
</feature>
<feature type="binding site" evidence="1">
    <location>
        <begin position="165"/>
        <end position="166"/>
    </location>
    <ligand>
        <name>(S)-2,3,4,5-tetrahydrodipicolinate</name>
        <dbReference type="ChEBI" id="CHEBI:16845"/>
    </ligand>
</feature>
<evidence type="ECO:0000255" key="1">
    <source>
        <dbReference type="HAMAP-Rule" id="MF_00102"/>
    </source>
</evidence>
<evidence type="ECO:0000305" key="2"/>
<reference key="1">
    <citation type="journal article" date="2005" name="Infect. Immun.">
        <title>Whole-genome analyses of speciation events in pathogenic Brucellae.</title>
        <authorList>
            <person name="Chain P.S."/>
            <person name="Comerci D.J."/>
            <person name="Tolmasky M.E."/>
            <person name="Larimer F.W."/>
            <person name="Malfatti S.A."/>
            <person name="Vergez L.M."/>
            <person name="Aguero F."/>
            <person name="Land M.L."/>
            <person name="Ugalde R.A."/>
            <person name="Garcia E."/>
        </authorList>
    </citation>
    <scope>NUCLEOTIDE SEQUENCE [LARGE SCALE GENOMIC DNA]</scope>
    <source>
        <strain>2308</strain>
    </source>
</reference>
<keyword id="KW-0028">Amino-acid biosynthesis</keyword>
<keyword id="KW-0963">Cytoplasm</keyword>
<keyword id="KW-0220">Diaminopimelate biosynthesis</keyword>
<keyword id="KW-0457">Lysine biosynthesis</keyword>
<keyword id="KW-0520">NAD</keyword>
<keyword id="KW-0521">NADP</keyword>
<keyword id="KW-0560">Oxidoreductase</keyword>
<keyword id="KW-1185">Reference proteome</keyword>
<accession>Q2YJN7</accession>